<protein>
    <recommendedName>
        <fullName evidence="1">Holliday junction branch migration complex subunit RuvB</fullName>
        <ecNumber evidence="1">3.6.4.-</ecNumber>
    </recommendedName>
</protein>
<comment type="function">
    <text evidence="1">The RuvA-RuvB-RuvC complex processes Holliday junction (HJ) DNA during genetic recombination and DNA repair, while the RuvA-RuvB complex plays an important role in the rescue of blocked DNA replication forks via replication fork reversal (RFR). RuvA specifically binds to HJ cruciform DNA, conferring on it an open structure. The RuvB hexamer acts as an ATP-dependent pump, pulling dsDNA into and through the RuvAB complex. RuvB forms 2 homohexamers on either side of HJ DNA bound by 1 or 2 RuvA tetramers; 4 subunits per hexamer contact DNA at a time. Coordinated motions by a converter formed by DNA-disengaged RuvB subunits stimulates ATP hydrolysis and nucleotide exchange. Immobilization of the converter enables RuvB to convert the ATP-contained energy into a lever motion, pulling 2 nucleotides of DNA out of the RuvA tetramer per ATP hydrolyzed, thus driving DNA branch migration. The RuvB motors rotate together with the DNA substrate, which together with the progressing nucleotide cycle form the mechanistic basis for DNA recombination by continuous HJ branch migration. Branch migration allows RuvC to scan DNA until it finds its consensus sequence, where it cleaves and resolves cruciform DNA.</text>
</comment>
<comment type="catalytic activity">
    <reaction evidence="1">
        <text>ATP + H2O = ADP + phosphate + H(+)</text>
        <dbReference type="Rhea" id="RHEA:13065"/>
        <dbReference type="ChEBI" id="CHEBI:15377"/>
        <dbReference type="ChEBI" id="CHEBI:15378"/>
        <dbReference type="ChEBI" id="CHEBI:30616"/>
        <dbReference type="ChEBI" id="CHEBI:43474"/>
        <dbReference type="ChEBI" id="CHEBI:456216"/>
    </reaction>
</comment>
<comment type="subunit">
    <text evidence="1">Homohexamer. Forms an RuvA(8)-RuvB(12)-Holliday junction (HJ) complex. HJ DNA is sandwiched between 2 RuvA tetramers; dsDNA enters through RuvA and exits via RuvB. An RuvB hexamer assembles on each DNA strand where it exits the tetramer. Each RuvB hexamer is contacted by two RuvA subunits (via domain III) on 2 adjacent RuvB subunits; this complex drives branch migration. In the full resolvosome a probable DNA-RuvA(4)-RuvB(12)-RuvC(2) complex forms which resolves the HJ.</text>
</comment>
<comment type="subcellular location">
    <subcellularLocation>
        <location evidence="1">Cytoplasm</location>
    </subcellularLocation>
</comment>
<comment type="domain">
    <text evidence="1">Has 3 domains, the large (RuvB-L) and small ATPase (RuvB-S) domains and the C-terminal head (RuvB-H) domain. The head domain binds DNA, while the ATPase domains jointly bind ATP, ADP or are empty depending on the state of the subunit in the translocation cycle. During a single DNA translocation step the structure of each domain remains the same, but their relative positions change.</text>
</comment>
<comment type="similarity">
    <text evidence="1">Belongs to the RuvB family.</text>
</comment>
<dbReference type="EC" id="3.6.4.-" evidence="1"/>
<dbReference type="EMBL" id="CP001048">
    <property type="protein sequence ID" value="ACC89063.1"/>
    <property type="molecule type" value="Genomic_DNA"/>
</dbReference>
<dbReference type="RefSeq" id="WP_002211198.1">
    <property type="nucleotide sequence ID" value="NZ_CP009780.1"/>
</dbReference>
<dbReference type="SMR" id="B2K324"/>
<dbReference type="GeneID" id="57976603"/>
<dbReference type="KEGG" id="ypb:YPTS_2100"/>
<dbReference type="PATRIC" id="fig|502801.10.peg.1491"/>
<dbReference type="GO" id="GO:0005737">
    <property type="term" value="C:cytoplasm"/>
    <property type="evidence" value="ECO:0007669"/>
    <property type="project" value="UniProtKB-SubCell"/>
</dbReference>
<dbReference type="GO" id="GO:0048476">
    <property type="term" value="C:Holliday junction resolvase complex"/>
    <property type="evidence" value="ECO:0007669"/>
    <property type="project" value="UniProtKB-UniRule"/>
</dbReference>
<dbReference type="GO" id="GO:0005524">
    <property type="term" value="F:ATP binding"/>
    <property type="evidence" value="ECO:0007669"/>
    <property type="project" value="UniProtKB-UniRule"/>
</dbReference>
<dbReference type="GO" id="GO:0016887">
    <property type="term" value="F:ATP hydrolysis activity"/>
    <property type="evidence" value="ECO:0007669"/>
    <property type="project" value="InterPro"/>
</dbReference>
<dbReference type="GO" id="GO:0000400">
    <property type="term" value="F:four-way junction DNA binding"/>
    <property type="evidence" value="ECO:0007669"/>
    <property type="project" value="UniProtKB-UniRule"/>
</dbReference>
<dbReference type="GO" id="GO:0009378">
    <property type="term" value="F:four-way junction helicase activity"/>
    <property type="evidence" value="ECO:0007669"/>
    <property type="project" value="InterPro"/>
</dbReference>
<dbReference type="GO" id="GO:0006310">
    <property type="term" value="P:DNA recombination"/>
    <property type="evidence" value="ECO:0007669"/>
    <property type="project" value="UniProtKB-UniRule"/>
</dbReference>
<dbReference type="GO" id="GO:0006281">
    <property type="term" value="P:DNA repair"/>
    <property type="evidence" value="ECO:0007669"/>
    <property type="project" value="UniProtKB-UniRule"/>
</dbReference>
<dbReference type="CDD" id="cd00009">
    <property type="entry name" value="AAA"/>
    <property type="match status" value="1"/>
</dbReference>
<dbReference type="FunFam" id="1.10.10.10:FF:000086">
    <property type="entry name" value="Holliday junction ATP-dependent DNA helicase RuvB"/>
    <property type="match status" value="1"/>
</dbReference>
<dbReference type="FunFam" id="1.10.8.60:FF:000023">
    <property type="entry name" value="Holliday junction ATP-dependent DNA helicase RuvB"/>
    <property type="match status" value="1"/>
</dbReference>
<dbReference type="FunFam" id="3.40.50.300:FF:000073">
    <property type="entry name" value="Holliday junction ATP-dependent DNA helicase RuvB"/>
    <property type="match status" value="1"/>
</dbReference>
<dbReference type="Gene3D" id="1.10.8.60">
    <property type="match status" value="1"/>
</dbReference>
<dbReference type="Gene3D" id="3.40.50.300">
    <property type="entry name" value="P-loop containing nucleotide triphosphate hydrolases"/>
    <property type="match status" value="1"/>
</dbReference>
<dbReference type="Gene3D" id="1.10.10.10">
    <property type="entry name" value="Winged helix-like DNA-binding domain superfamily/Winged helix DNA-binding domain"/>
    <property type="match status" value="1"/>
</dbReference>
<dbReference type="HAMAP" id="MF_00016">
    <property type="entry name" value="DNA_HJ_migration_RuvB"/>
    <property type="match status" value="1"/>
</dbReference>
<dbReference type="InterPro" id="IPR003593">
    <property type="entry name" value="AAA+_ATPase"/>
</dbReference>
<dbReference type="InterPro" id="IPR041445">
    <property type="entry name" value="AAA_lid_4"/>
</dbReference>
<dbReference type="InterPro" id="IPR004605">
    <property type="entry name" value="DNA_helicase_Holl-junc_RuvB"/>
</dbReference>
<dbReference type="InterPro" id="IPR027417">
    <property type="entry name" value="P-loop_NTPase"/>
</dbReference>
<dbReference type="InterPro" id="IPR008824">
    <property type="entry name" value="RuvB-like_N"/>
</dbReference>
<dbReference type="InterPro" id="IPR008823">
    <property type="entry name" value="RuvB_C"/>
</dbReference>
<dbReference type="InterPro" id="IPR036388">
    <property type="entry name" value="WH-like_DNA-bd_sf"/>
</dbReference>
<dbReference type="InterPro" id="IPR036390">
    <property type="entry name" value="WH_DNA-bd_sf"/>
</dbReference>
<dbReference type="NCBIfam" id="NF000868">
    <property type="entry name" value="PRK00080.1"/>
    <property type="match status" value="1"/>
</dbReference>
<dbReference type="NCBIfam" id="TIGR00635">
    <property type="entry name" value="ruvB"/>
    <property type="match status" value="1"/>
</dbReference>
<dbReference type="PANTHER" id="PTHR42848">
    <property type="match status" value="1"/>
</dbReference>
<dbReference type="PANTHER" id="PTHR42848:SF1">
    <property type="entry name" value="HOLLIDAY JUNCTION BRANCH MIGRATION COMPLEX SUBUNIT RUVB"/>
    <property type="match status" value="1"/>
</dbReference>
<dbReference type="Pfam" id="PF17864">
    <property type="entry name" value="AAA_lid_4"/>
    <property type="match status" value="1"/>
</dbReference>
<dbReference type="Pfam" id="PF05491">
    <property type="entry name" value="RuvB_C"/>
    <property type="match status" value="1"/>
</dbReference>
<dbReference type="Pfam" id="PF05496">
    <property type="entry name" value="RuvB_N"/>
    <property type="match status" value="1"/>
</dbReference>
<dbReference type="SMART" id="SM00382">
    <property type="entry name" value="AAA"/>
    <property type="match status" value="1"/>
</dbReference>
<dbReference type="SUPFAM" id="SSF52540">
    <property type="entry name" value="P-loop containing nucleoside triphosphate hydrolases"/>
    <property type="match status" value="1"/>
</dbReference>
<dbReference type="SUPFAM" id="SSF46785">
    <property type="entry name" value="Winged helix' DNA-binding domain"/>
    <property type="match status" value="1"/>
</dbReference>
<reference key="1">
    <citation type="submission" date="2008-04" db="EMBL/GenBank/DDBJ databases">
        <title>Complete sequence of Yersinia pseudotuberculosis PB1/+.</title>
        <authorList>
            <person name="Copeland A."/>
            <person name="Lucas S."/>
            <person name="Lapidus A."/>
            <person name="Glavina del Rio T."/>
            <person name="Dalin E."/>
            <person name="Tice H."/>
            <person name="Bruce D."/>
            <person name="Goodwin L."/>
            <person name="Pitluck S."/>
            <person name="Munk A.C."/>
            <person name="Brettin T."/>
            <person name="Detter J.C."/>
            <person name="Han C."/>
            <person name="Tapia R."/>
            <person name="Schmutz J."/>
            <person name="Larimer F."/>
            <person name="Land M."/>
            <person name="Hauser L."/>
            <person name="Challacombe J.F."/>
            <person name="Green L."/>
            <person name="Lindler L.E."/>
            <person name="Nikolich M.P."/>
            <person name="Richardson P."/>
        </authorList>
    </citation>
    <scope>NUCLEOTIDE SEQUENCE [LARGE SCALE GENOMIC DNA]</scope>
    <source>
        <strain>PB1/+</strain>
    </source>
</reference>
<keyword id="KW-0067">ATP-binding</keyword>
<keyword id="KW-0963">Cytoplasm</keyword>
<keyword id="KW-0227">DNA damage</keyword>
<keyword id="KW-0233">DNA recombination</keyword>
<keyword id="KW-0234">DNA repair</keyword>
<keyword id="KW-0238">DNA-binding</keyword>
<keyword id="KW-0378">Hydrolase</keyword>
<keyword id="KW-0547">Nucleotide-binding</keyword>
<gene>
    <name evidence="1" type="primary">ruvB</name>
    <name type="ordered locus">YPTS_2100</name>
</gene>
<sequence length="334" mass="37050">MIEADRLISAAVINDEESIDRAIRPKLLTEYVGQPHVREQMEIFIQAAKQRGDALDHVLIFGPPGLGKTTLANIIANEMGVNLRTTSGPVLEKAGDLAAMLTNLEPHDVLFIDEIHRLSPVVEEILYPAMEDYQLDIMIGEGPAARSIKLDLPPFTLIGATTRAGSLTSPLRDRFGIVQRLEFYQVADLEHIVSRSAKCLGLELTPEGAHQLARRSRGTPRITNRLLRRVRDFAEVRADGAINGEVAMKALDMLNVDAEGFDFMDRKLLLAVIDKFMGGPVGLDNLAAAIGEERETIEDVLEPYLIQQGFIQRTPRGRIATNHAYKHFGITREE</sequence>
<evidence type="ECO:0000255" key="1">
    <source>
        <dbReference type="HAMAP-Rule" id="MF_00016"/>
    </source>
</evidence>
<proteinExistence type="inferred from homology"/>
<accession>B2K324</accession>
<organism>
    <name type="scientific">Yersinia pseudotuberculosis serotype IB (strain PB1/+)</name>
    <dbReference type="NCBI Taxonomy" id="502801"/>
    <lineage>
        <taxon>Bacteria</taxon>
        <taxon>Pseudomonadati</taxon>
        <taxon>Pseudomonadota</taxon>
        <taxon>Gammaproteobacteria</taxon>
        <taxon>Enterobacterales</taxon>
        <taxon>Yersiniaceae</taxon>
        <taxon>Yersinia</taxon>
    </lineage>
</organism>
<feature type="chain" id="PRO_1000089698" description="Holliday junction branch migration complex subunit RuvB">
    <location>
        <begin position="1"/>
        <end position="334"/>
    </location>
</feature>
<feature type="region of interest" description="Large ATPase domain (RuvB-L)" evidence="1">
    <location>
        <begin position="4"/>
        <end position="184"/>
    </location>
</feature>
<feature type="region of interest" description="Small ATPAse domain (RuvB-S)" evidence="1">
    <location>
        <begin position="185"/>
        <end position="255"/>
    </location>
</feature>
<feature type="region of interest" description="Head domain (RuvB-H)" evidence="1">
    <location>
        <begin position="258"/>
        <end position="334"/>
    </location>
</feature>
<feature type="binding site" evidence="1">
    <location>
        <position position="23"/>
    </location>
    <ligand>
        <name>ATP</name>
        <dbReference type="ChEBI" id="CHEBI:30616"/>
    </ligand>
</feature>
<feature type="binding site" evidence="1">
    <location>
        <position position="24"/>
    </location>
    <ligand>
        <name>ATP</name>
        <dbReference type="ChEBI" id="CHEBI:30616"/>
    </ligand>
</feature>
<feature type="binding site" evidence="1">
    <location>
        <position position="65"/>
    </location>
    <ligand>
        <name>ATP</name>
        <dbReference type="ChEBI" id="CHEBI:30616"/>
    </ligand>
</feature>
<feature type="binding site" evidence="1">
    <location>
        <position position="68"/>
    </location>
    <ligand>
        <name>ATP</name>
        <dbReference type="ChEBI" id="CHEBI:30616"/>
    </ligand>
</feature>
<feature type="binding site" evidence="1">
    <location>
        <position position="69"/>
    </location>
    <ligand>
        <name>ATP</name>
        <dbReference type="ChEBI" id="CHEBI:30616"/>
    </ligand>
</feature>
<feature type="binding site" evidence="1">
    <location>
        <position position="69"/>
    </location>
    <ligand>
        <name>Mg(2+)</name>
        <dbReference type="ChEBI" id="CHEBI:18420"/>
    </ligand>
</feature>
<feature type="binding site" evidence="1">
    <location>
        <position position="70"/>
    </location>
    <ligand>
        <name>ATP</name>
        <dbReference type="ChEBI" id="CHEBI:30616"/>
    </ligand>
</feature>
<feature type="binding site" evidence="1">
    <location>
        <begin position="131"/>
        <end position="133"/>
    </location>
    <ligand>
        <name>ATP</name>
        <dbReference type="ChEBI" id="CHEBI:30616"/>
    </ligand>
</feature>
<feature type="binding site" evidence="1">
    <location>
        <position position="174"/>
    </location>
    <ligand>
        <name>ATP</name>
        <dbReference type="ChEBI" id="CHEBI:30616"/>
    </ligand>
</feature>
<feature type="binding site" evidence="1">
    <location>
        <position position="184"/>
    </location>
    <ligand>
        <name>ATP</name>
        <dbReference type="ChEBI" id="CHEBI:30616"/>
    </ligand>
</feature>
<feature type="binding site" evidence="1">
    <location>
        <position position="221"/>
    </location>
    <ligand>
        <name>ATP</name>
        <dbReference type="ChEBI" id="CHEBI:30616"/>
    </ligand>
</feature>
<feature type="binding site" evidence="1">
    <location>
        <position position="294"/>
    </location>
    <ligand>
        <name>DNA</name>
        <dbReference type="ChEBI" id="CHEBI:16991"/>
    </ligand>
</feature>
<feature type="binding site" evidence="1">
    <location>
        <position position="313"/>
    </location>
    <ligand>
        <name>DNA</name>
        <dbReference type="ChEBI" id="CHEBI:16991"/>
    </ligand>
</feature>
<feature type="binding site" evidence="1">
    <location>
        <position position="318"/>
    </location>
    <ligand>
        <name>DNA</name>
        <dbReference type="ChEBI" id="CHEBI:16991"/>
    </ligand>
</feature>
<name>RUVB_YERPB</name>